<name>NS1_I68A0</name>
<protein>
    <recommendedName>
        <fullName evidence="1">Non-structural protein 1</fullName>
        <shortName evidence="1">NS1</shortName>
    </recommendedName>
    <alternativeName>
        <fullName evidence="1">NS1A</fullName>
    </alternativeName>
</protein>
<organismHost>
    <name type="scientific">Aves</name>
    <dbReference type="NCBI Taxonomy" id="8782"/>
</organismHost>
<organismHost>
    <name type="scientific">Cetacea</name>
    <name type="common">whales</name>
    <dbReference type="NCBI Taxonomy" id="9721"/>
</organismHost>
<organismHost>
    <name type="scientific">Homo sapiens</name>
    <name type="common">Human</name>
    <dbReference type="NCBI Taxonomy" id="9606"/>
</organismHost>
<organismHost>
    <name type="scientific">Phocidae</name>
    <name type="common">true seals</name>
    <dbReference type="NCBI Taxonomy" id="9709"/>
</organismHost>
<organismHost>
    <name type="scientific">Sus scrofa</name>
    <name type="common">Pig</name>
    <dbReference type="NCBI Taxonomy" id="9823"/>
</organismHost>
<comment type="function">
    <text evidence="1">Inhibits post-transcriptional processing of cellular pre-mRNA, by binding and inhibiting two cellular proteins that are required for the 3'-end processing of cellular pre-mRNAs: the 30 kDa cleavage and polyadenylation specificity factor/CPSF4 and the poly(A)-binding protein 2/PABPN1. In turn, unprocessed 3' end pre-mRNAs accumulate in the host nucleus and are no longer exported to the cytoplasm. Cellular protein synthesis is thereby shut off very early after virus infection. Viral protein synthesis is not affected by the inhibition of the cellular 3' end processing machinery because the poly(A) tails of viral mRNAs are produced by the viral polymerase through a stuttering mechanism. Prevents the establishment of the cellular antiviral state by inhibiting TRIM25-mediated RIGI ubiquitination, which normally triggers the antiviral transduction signal that leads to the activation of type I IFN genes by transcription factors IRF3 and IRF7. Also binds poly(A) and U6 snRNA. Inhibits the integrated stress response (ISR) in the infected cell by blocking dsRNA binding by EIF2AK2/PKR and further phosphorylation of EIF2S1/EIF-2ALPHA. Stress granule formation is thus inhibited, which allows protein synthesis and viral replication.</text>
</comment>
<comment type="subunit">
    <text evidence="1">Homodimer. Interacts with host TRIM25 (via coiled coil); this interaction specifically inhibits TRIM25 multimerization and TRIM25-mediated RIGI CARD ubiquitination. Interacts with human EIF2AK2/PKR, CPSF4, IVNS1ABP and PABPN1.</text>
</comment>
<comment type="subcellular location">
    <subcellularLocation>
        <location evidence="1">Host nucleus</location>
    </subcellularLocation>
    <subcellularLocation>
        <location evidence="1">Host cytoplasm</location>
    </subcellularLocation>
    <text evidence="1">In uninfected, transfected cells, NS1 is localized in the nucleus. Only in virus infected cells, the nuclear export signal is unveiled, presumably by a viral protein, and a fraction of NS1 is exported in the cytoplasm.</text>
</comment>
<comment type="alternative products">
    <event type="alternative splicing"/>
    <isoform>
        <id>P69277-1</id>
        <name>NS1</name>
        <sequence type="displayed"/>
    </isoform>
    <isoform>
        <id>Q02600-1</id>
        <name>NEP</name>
        <name>NS2</name>
        <sequence type="external"/>
    </isoform>
</comment>
<comment type="domain">
    <text evidence="1">The dsRNA-binding region is required for suppression of RNA silencing.</text>
</comment>
<comment type="PTM">
    <text evidence="1">Upon interferon induction, ISGylated via host HERC5; this results in the impairment of NS1 interaction with RNA targets due to its inability to form homodimers and to interact with host EIF2AK2/PKR.</text>
</comment>
<comment type="similarity">
    <text evidence="1">Belongs to the influenza A viruses NS1 family.</text>
</comment>
<proteinExistence type="inferred from homology"/>
<gene>
    <name evidence="1" type="primary">NS</name>
</gene>
<accession>P69277</accession>
<accession>Q02599</accession>
<sequence length="237" mass="26843">MDSNTVSSFQVDCFLWHVRKQVVDQELGDAPFLDRLRRDQKSLRGRGSTLGLNIEAATRVGKQIVERILKEESDEALKMTMASAPASRYLTDMTIEELSRDWFMLMPKQKVEGPLCIRIDQAIMDKNVMLKANFSVIFDRLETLILLRAFTEEGAIVGEISPLPSLPGHTIEDVKNAIGVLIGGLEWNDNTVRVSKTLQRFAWGSSNENGRPPLTPKQKRKMARTVRSKVRRDKMAD</sequence>
<keyword id="KW-0025">Alternative splicing</keyword>
<keyword id="KW-1262">Eukaryotic host gene expression shutoff by virus</keyword>
<keyword id="KW-1035">Host cytoplasm</keyword>
<keyword id="KW-1190">Host gene expression shutoff by virus</keyword>
<keyword id="KW-1192">Host mRNA suppression by virus</keyword>
<keyword id="KW-1048">Host nucleus</keyword>
<keyword id="KW-0945">Host-virus interaction</keyword>
<keyword id="KW-1090">Inhibition of host innate immune response by virus</keyword>
<keyword id="KW-1114">Inhibition of host interferon signaling pathway by virus</keyword>
<keyword id="KW-1102">Inhibition of host PKR by virus</keyword>
<keyword id="KW-1103">Inhibition of host pre-mRNA processing by virus</keyword>
<keyword id="KW-1088">Inhibition of host RIG-I by virus</keyword>
<keyword id="KW-1113">Inhibition of host RLR pathway by virus</keyword>
<keyword id="KW-0922">Interferon antiviral system evasion</keyword>
<keyword id="KW-1185">Reference proteome</keyword>
<keyword id="KW-0694">RNA-binding</keyword>
<keyword id="KW-0832">Ubl conjugation</keyword>
<keyword id="KW-0899">Viral immunoevasion</keyword>
<reference key="1">
    <citation type="journal article" date="1990" name="Proc. Natl. Acad. Sci. U.S.A.">
        <title>Mutation in NS2, a nonstructural protein of influenza A virus, extragenically causes aberrant replication and expression of the PA gene and leads to generation of defective interfering particles.</title>
        <authorList>
            <person name="Odagiri T."/>
            <person name="Tobita K."/>
        </authorList>
    </citation>
    <scope>NUCLEOTIDE SEQUENCE [GENOMIC RNA]</scope>
</reference>
<reference key="2">
    <citation type="journal article" date="2003" name="Virology">
        <title>Intracellular warfare between human influenza viruses and human cells: the roles of the viral NS1 protein.</title>
        <authorList>
            <person name="Krug R.M."/>
            <person name="Yuan W."/>
            <person name="Noah D.L."/>
            <person name="Latham A.G."/>
        </authorList>
    </citation>
    <scope>REVIEW</scope>
</reference>
<dbReference type="EMBL" id="D10571">
    <property type="protein sequence ID" value="BAA01428.1"/>
    <property type="molecule type" value="Genomic_RNA"/>
</dbReference>
<dbReference type="EMBL" id="M34829">
    <property type="protein sequence ID" value="AAA43086.1"/>
    <property type="molecule type" value="Genomic_RNA"/>
</dbReference>
<dbReference type="BMRB" id="P69277"/>
<dbReference type="SMR" id="P69277"/>
<dbReference type="IntAct" id="P69277">
    <property type="interactions" value="1"/>
</dbReference>
<dbReference type="MINT" id="P69277"/>
<dbReference type="Proteomes" id="UP000137932">
    <property type="component" value="Genome"/>
</dbReference>
<dbReference type="GO" id="GO:0030430">
    <property type="term" value="C:host cell cytoplasm"/>
    <property type="evidence" value="ECO:0007669"/>
    <property type="project" value="UniProtKB-SubCell"/>
</dbReference>
<dbReference type="GO" id="GO:0042025">
    <property type="term" value="C:host cell nucleus"/>
    <property type="evidence" value="ECO:0007669"/>
    <property type="project" value="UniProtKB-SubCell"/>
</dbReference>
<dbReference type="GO" id="GO:0030291">
    <property type="term" value="F:protein serine/threonine kinase inhibitor activity"/>
    <property type="evidence" value="ECO:0007669"/>
    <property type="project" value="UniProtKB-KW"/>
</dbReference>
<dbReference type="GO" id="GO:0003723">
    <property type="term" value="F:RNA binding"/>
    <property type="evidence" value="ECO:0007669"/>
    <property type="project" value="UniProtKB-KW"/>
</dbReference>
<dbReference type="GO" id="GO:0039540">
    <property type="term" value="P:symbiont-mediated suppression of host cytoplasmic pattern recognition receptor signaling pathway via inhibition of RIG-I activity"/>
    <property type="evidence" value="ECO:0007669"/>
    <property type="project" value="UniProtKB-KW"/>
</dbReference>
<dbReference type="GO" id="GO:0039657">
    <property type="term" value="P:symbiont-mediated suppression of host gene expression"/>
    <property type="evidence" value="ECO:0007669"/>
    <property type="project" value="UniProtKB-KW"/>
</dbReference>
<dbReference type="GO" id="GO:0039524">
    <property type="term" value="P:symbiont-mediated suppression of host mRNA processing"/>
    <property type="evidence" value="ECO:0007669"/>
    <property type="project" value="UniProtKB-KW"/>
</dbReference>
<dbReference type="GO" id="GO:0039580">
    <property type="term" value="P:symbiont-mediated suppression of host PKR/eIFalpha signaling"/>
    <property type="evidence" value="ECO:0007669"/>
    <property type="project" value="UniProtKB-KW"/>
</dbReference>
<dbReference type="GO" id="GO:0039502">
    <property type="term" value="P:symbiont-mediated suppression of host type I interferon-mediated signaling pathway"/>
    <property type="evidence" value="ECO:0007669"/>
    <property type="project" value="UniProtKB-KW"/>
</dbReference>
<dbReference type="FunFam" id="1.10.287.10:FF:000001">
    <property type="entry name" value="Non-structural protein 1"/>
    <property type="match status" value="1"/>
</dbReference>
<dbReference type="FunFam" id="3.30.420.330:FF:000001">
    <property type="entry name" value="Non-structural protein 1"/>
    <property type="match status" value="1"/>
</dbReference>
<dbReference type="Gene3D" id="3.30.420.330">
    <property type="entry name" value="Influenza virus non-structural protein, effector domain"/>
    <property type="match status" value="1"/>
</dbReference>
<dbReference type="Gene3D" id="1.10.287.10">
    <property type="entry name" value="S15/NS1, RNA-binding"/>
    <property type="match status" value="1"/>
</dbReference>
<dbReference type="HAMAP" id="MF_04066">
    <property type="entry name" value="INFV_NS1"/>
    <property type="match status" value="1"/>
</dbReference>
<dbReference type="InterPro" id="IPR004208">
    <property type="entry name" value="NS1"/>
</dbReference>
<dbReference type="InterPro" id="IPR000256">
    <property type="entry name" value="NS1A"/>
</dbReference>
<dbReference type="InterPro" id="IPR038064">
    <property type="entry name" value="NS1A_effect_dom-like_sf"/>
</dbReference>
<dbReference type="InterPro" id="IPR009068">
    <property type="entry name" value="uS15_NS1_RNA-bd_sf"/>
</dbReference>
<dbReference type="Pfam" id="PF00600">
    <property type="entry name" value="Flu_NS1"/>
    <property type="match status" value="1"/>
</dbReference>
<dbReference type="SUPFAM" id="SSF143021">
    <property type="entry name" value="Ns1 effector domain-like"/>
    <property type="match status" value="1"/>
</dbReference>
<dbReference type="SUPFAM" id="SSF47060">
    <property type="entry name" value="S15/NS1 RNA-binding domain"/>
    <property type="match status" value="1"/>
</dbReference>
<feature type="chain" id="PRO_0000078915" description="Non-structural protein 1">
    <location>
        <begin position="1"/>
        <end position="237"/>
    </location>
</feature>
<feature type="region of interest" description="RNA-binding and homodimerization" evidence="1">
    <location>
        <begin position="1"/>
        <end position="73"/>
    </location>
</feature>
<feature type="region of interest" description="CPSF4-binding" evidence="1">
    <location>
        <begin position="180"/>
        <end position="215"/>
    </location>
</feature>
<feature type="region of interest" description="Disordered" evidence="2">
    <location>
        <begin position="205"/>
        <end position="237"/>
    </location>
</feature>
<feature type="region of interest" description="PABPN1-binding" evidence="1">
    <location>
        <begin position="223"/>
        <end position="230"/>
    </location>
</feature>
<feature type="short sequence motif" description="Nuclear localization signal" evidence="1">
    <location>
        <begin position="34"/>
        <end position="38"/>
    </location>
</feature>
<feature type="short sequence motif" description="Nuclear export signal" evidence="1">
    <location>
        <begin position="137"/>
        <end position="146"/>
    </location>
</feature>
<feature type="compositionally biased region" description="Basic residues" evidence="2">
    <location>
        <begin position="217"/>
        <end position="237"/>
    </location>
</feature>
<organism>
    <name type="scientific">Influenza A virus (strain A/Aichi/2/1968 H3N2)</name>
    <dbReference type="NCBI Taxonomy" id="387139"/>
    <lineage>
        <taxon>Viruses</taxon>
        <taxon>Riboviria</taxon>
        <taxon>Orthornavirae</taxon>
        <taxon>Negarnaviricota</taxon>
        <taxon>Polyploviricotina</taxon>
        <taxon>Insthoviricetes</taxon>
        <taxon>Articulavirales</taxon>
        <taxon>Orthomyxoviridae</taxon>
        <taxon>Alphainfluenzavirus</taxon>
        <taxon>Alphainfluenzavirus influenzae</taxon>
        <taxon>Influenza A virus</taxon>
    </lineage>
</organism>
<evidence type="ECO:0000255" key="1">
    <source>
        <dbReference type="HAMAP-Rule" id="MF_04066"/>
    </source>
</evidence>
<evidence type="ECO:0000256" key="2">
    <source>
        <dbReference type="SAM" id="MobiDB-lite"/>
    </source>
</evidence>